<accession>B5R3H6</accession>
<gene>
    <name evidence="1" type="primary">yaeH</name>
    <name type="ordered locus">SEN0217</name>
</gene>
<sequence>MYDNLKSLGITNPEEIDRYSLRQEANNDILKIYFQKDRGEFFAKSVKFKYPRQRKTVVADGIGQGYKEVQEISPNLRYVIDELDQICQRDRSELDLKRKILDDLRHLESVVANKISEIEADLDKLTRK</sequence>
<proteinExistence type="inferred from homology"/>
<protein>
    <recommendedName>
        <fullName evidence="1">UPF0325 protein YaeH</fullName>
    </recommendedName>
</protein>
<organism>
    <name type="scientific">Salmonella enteritidis PT4 (strain P125109)</name>
    <dbReference type="NCBI Taxonomy" id="550537"/>
    <lineage>
        <taxon>Bacteria</taxon>
        <taxon>Pseudomonadati</taxon>
        <taxon>Pseudomonadota</taxon>
        <taxon>Gammaproteobacteria</taxon>
        <taxon>Enterobacterales</taxon>
        <taxon>Enterobacteriaceae</taxon>
        <taxon>Salmonella</taxon>
    </lineage>
</organism>
<reference key="1">
    <citation type="journal article" date="2008" name="Genome Res.">
        <title>Comparative genome analysis of Salmonella enteritidis PT4 and Salmonella gallinarum 287/91 provides insights into evolutionary and host adaptation pathways.</title>
        <authorList>
            <person name="Thomson N.R."/>
            <person name="Clayton D.J."/>
            <person name="Windhorst D."/>
            <person name="Vernikos G."/>
            <person name="Davidson S."/>
            <person name="Churcher C."/>
            <person name="Quail M.A."/>
            <person name="Stevens M."/>
            <person name="Jones M.A."/>
            <person name="Watson M."/>
            <person name="Barron A."/>
            <person name="Layton A."/>
            <person name="Pickard D."/>
            <person name="Kingsley R.A."/>
            <person name="Bignell A."/>
            <person name="Clark L."/>
            <person name="Harris B."/>
            <person name="Ormond D."/>
            <person name="Abdellah Z."/>
            <person name="Brooks K."/>
            <person name="Cherevach I."/>
            <person name="Chillingworth T."/>
            <person name="Woodward J."/>
            <person name="Norberczak H."/>
            <person name="Lord A."/>
            <person name="Arrowsmith C."/>
            <person name="Jagels K."/>
            <person name="Moule S."/>
            <person name="Mungall K."/>
            <person name="Saunders M."/>
            <person name="Whitehead S."/>
            <person name="Chabalgoity J.A."/>
            <person name="Maskell D."/>
            <person name="Humphreys T."/>
            <person name="Roberts M."/>
            <person name="Barrow P.A."/>
            <person name="Dougan G."/>
            <person name="Parkhill J."/>
        </authorList>
    </citation>
    <scope>NUCLEOTIDE SEQUENCE [LARGE SCALE GENOMIC DNA]</scope>
    <source>
        <strain>P125109</strain>
    </source>
</reference>
<evidence type="ECO:0000255" key="1">
    <source>
        <dbReference type="HAMAP-Rule" id="MF_01519"/>
    </source>
</evidence>
<feature type="chain" id="PRO_1000198437" description="UPF0325 protein YaeH">
    <location>
        <begin position="1"/>
        <end position="128"/>
    </location>
</feature>
<dbReference type="EMBL" id="AM933172">
    <property type="protein sequence ID" value="CAR31805.1"/>
    <property type="molecule type" value="Genomic_DNA"/>
</dbReference>
<dbReference type="RefSeq" id="WP_000272193.1">
    <property type="nucleotide sequence ID" value="NC_011294.1"/>
</dbReference>
<dbReference type="SMR" id="B5R3H6"/>
<dbReference type="KEGG" id="set:SEN0217"/>
<dbReference type="HOGENOM" id="CLU_136774_0_0_6"/>
<dbReference type="Proteomes" id="UP000000613">
    <property type="component" value="Chromosome"/>
</dbReference>
<dbReference type="HAMAP" id="MF_01519">
    <property type="entry name" value="UPF0325"/>
    <property type="match status" value="1"/>
</dbReference>
<dbReference type="InterPro" id="IPR020911">
    <property type="entry name" value="UPF0325"/>
</dbReference>
<dbReference type="NCBIfam" id="NF010213">
    <property type="entry name" value="PRK13677.1"/>
    <property type="match status" value="1"/>
</dbReference>
<dbReference type="Pfam" id="PF11944">
    <property type="entry name" value="DUF3461"/>
    <property type="match status" value="1"/>
</dbReference>
<name>YAEH_SALEP</name>
<comment type="similarity">
    <text evidence="1">Belongs to the UPF0325 family.</text>
</comment>